<comment type="function">
    <text evidence="1">Catalyzes the NAD(P)-dependent oxidation of 4-(phosphooxy)-L-threonine (HTP) into 2-amino-3-oxo-4-(phosphooxy)butyric acid which spontaneously decarboxylates to form 3-amino-2-oxopropyl phosphate (AHAP).</text>
</comment>
<comment type="catalytic activity">
    <reaction evidence="1">
        <text>4-(phosphooxy)-L-threonine + NAD(+) = 3-amino-2-oxopropyl phosphate + CO2 + NADH</text>
        <dbReference type="Rhea" id="RHEA:32275"/>
        <dbReference type="ChEBI" id="CHEBI:16526"/>
        <dbReference type="ChEBI" id="CHEBI:57279"/>
        <dbReference type="ChEBI" id="CHEBI:57540"/>
        <dbReference type="ChEBI" id="CHEBI:57945"/>
        <dbReference type="ChEBI" id="CHEBI:58452"/>
        <dbReference type="EC" id="1.1.1.262"/>
    </reaction>
</comment>
<comment type="cofactor">
    <cofactor evidence="1">
        <name>Zn(2+)</name>
        <dbReference type="ChEBI" id="CHEBI:29105"/>
    </cofactor>
    <cofactor evidence="1">
        <name>Mg(2+)</name>
        <dbReference type="ChEBI" id="CHEBI:18420"/>
    </cofactor>
    <cofactor evidence="1">
        <name>Co(2+)</name>
        <dbReference type="ChEBI" id="CHEBI:48828"/>
    </cofactor>
    <text evidence="1">Binds 1 divalent metal cation per subunit. Can use ions such as Zn(2+), Mg(2+) or Co(2+).</text>
</comment>
<comment type="pathway">
    <text evidence="1">Cofactor biosynthesis; pyridoxine 5'-phosphate biosynthesis; pyridoxine 5'-phosphate from D-erythrose 4-phosphate: step 4/5.</text>
</comment>
<comment type="subunit">
    <text evidence="1">Homodimer.</text>
</comment>
<comment type="subcellular location">
    <subcellularLocation>
        <location evidence="1">Cytoplasm</location>
    </subcellularLocation>
</comment>
<comment type="miscellaneous">
    <text evidence="1">The active site is located at the dimer interface.</text>
</comment>
<comment type="similarity">
    <text evidence="1">Belongs to the PdxA family.</text>
</comment>
<proteinExistence type="inferred from homology"/>
<dbReference type="EC" id="1.1.1.262" evidence="1"/>
<dbReference type="EMBL" id="CU928163">
    <property type="protein sequence ID" value="CAR11277.1"/>
    <property type="molecule type" value="Genomic_DNA"/>
</dbReference>
<dbReference type="RefSeq" id="WP_000241280.1">
    <property type="nucleotide sequence ID" value="NC_011751.1"/>
</dbReference>
<dbReference type="RefSeq" id="YP_002410832.1">
    <property type="nucleotide sequence ID" value="NC_011751.1"/>
</dbReference>
<dbReference type="SMR" id="B7N7S7"/>
<dbReference type="STRING" id="585056.ECUMN_0054"/>
<dbReference type="KEGG" id="eum:ECUMN_0054"/>
<dbReference type="PATRIC" id="fig|585056.7.peg.241"/>
<dbReference type="HOGENOM" id="CLU_040168_1_0_6"/>
<dbReference type="UniPathway" id="UPA00244">
    <property type="reaction ID" value="UER00312"/>
</dbReference>
<dbReference type="Proteomes" id="UP000007097">
    <property type="component" value="Chromosome"/>
</dbReference>
<dbReference type="GO" id="GO:0005737">
    <property type="term" value="C:cytoplasm"/>
    <property type="evidence" value="ECO:0007669"/>
    <property type="project" value="UniProtKB-SubCell"/>
</dbReference>
<dbReference type="GO" id="GO:0050570">
    <property type="term" value="F:4-hydroxythreonine-4-phosphate dehydrogenase activity"/>
    <property type="evidence" value="ECO:0007669"/>
    <property type="project" value="UniProtKB-UniRule"/>
</dbReference>
<dbReference type="GO" id="GO:0050897">
    <property type="term" value="F:cobalt ion binding"/>
    <property type="evidence" value="ECO:0007669"/>
    <property type="project" value="UniProtKB-UniRule"/>
</dbReference>
<dbReference type="GO" id="GO:0000287">
    <property type="term" value="F:magnesium ion binding"/>
    <property type="evidence" value="ECO:0007669"/>
    <property type="project" value="UniProtKB-UniRule"/>
</dbReference>
<dbReference type="GO" id="GO:0051287">
    <property type="term" value="F:NAD binding"/>
    <property type="evidence" value="ECO:0007669"/>
    <property type="project" value="InterPro"/>
</dbReference>
<dbReference type="GO" id="GO:0008270">
    <property type="term" value="F:zinc ion binding"/>
    <property type="evidence" value="ECO:0007669"/>
    <property type="project" value="UniProtKB-UniRule"/>
</dbReference>
<dbReference type="GO" id="GO:0042823">
    <property type="term" value="P:pyridoxal phosphate biosynthetic process"/>
    <property type="evidence" value="ECO:0007669"/>
    <property type="project" value="UniProtKB-UniRule"/>
</dbReference>
<dbReference type="GO" id="GO:0008615">
    <property type="term" value="P:pyridoxine biosynthetic process"/>
    <property type="evidence" value="ECO:0007669"/>
    <property type="project" value="UniProtKB-UniRule"/>
</dbReference>
<dbReference type="FunFam" id="3.40.718.10:FF:000010">
    <property type="entry name" value="4-hydroxythreonine-4-phosphate dehydrogenase"/>
    <property type="match status" value="1"/>
</dbReference>
<dbReference type="Gene3D" id="3.40.718.10">
    <property type="entry name" value="Isopropylmalate Dehydrogenase"/>
    <property type="match status" value="1"/>
</dbReference>
<dbReference type="HAMAP" id="MF_00536">
    <property type="entry name" value="PdxA"/>
    <property type="match status" value="1"/>
</dbReference>
<dbReference type="InterPro" id="IPR037510">
    <property type="entry name" value="PdxA"/>
</dbReference>
<dbReference type="InterPro" id="IPR005255">
    <property type="entry name" value="PdxA_fam"/>
</dbReference>
<dbReference type="NCBIfam" id="TIGR00557">
    <property type="entry name" value="pdxA"/>
    <property type="match status" value="1"/>
</dbReference>
<dbReference type="PANTHER" id="PTHR30004">
    <property type="entry name" value="4-HYDROXYTHREONINE-4-PHOSPHATE DEHYDROGENASE"/>
    <property type="match status" value="1"/>
</dbReference>
<dbReference type="PANTHER" id="PTHR30004:SF5">
    <property type="entry name" value="4-HYDROXYTHREONINE-4-PHOSPHATE DEHYDROGENASE"/>
    <property type="match status" value="1"/>
</dbReference>
<dbReference type="Pfam" id="PF04166">
    <property type="entry name" value="PdxA"/>
    <property type="match status" value="1"/>
</dbReference>
<dbReference type="SUPFAM" id="SSF53659">
    <property type="entry name" value="Isocitrate/Isopropylmalate dehydrogenase-like"/>
    <property type="match status" value="1"/>
</dbReference>
<evidence type="ECO:0000255" key="1">
    <source>
        <dbReference type="HAMAP-Rule" id="MF_00536"/>
    </source>
</evidence>
<sequence length="329" mass="35163">MVKTQRVVITPGEPAGIGPDLVVQLAQREWPVELVVCADATLLTNRAAMLGLPLTLRPYSPNSPAQPQTAGTLTLLPVALRESVTAGQLAVENGHYVVETLARACDGCLNGEFAALITGPVHKGVINDAGIPFTGHTEFFEERSQAKKVVMMLATEELRVALATTHLPLRDIADAITPALLHEVIAILHHDLRTKFGIAEPRILVCGLNPHAGEGGHMGTEEIDTIIPVLDELRAQGMKLNGPLPADTLFQPKYLDNADAVLAMYHDQGLPVLKYQGFGRGVNITLGLPFIRTSVDHGTALELAGRGKADVGSFITALNLAIKMIVNTQ</sequence>
<gene>
    <name evidence="1" type="primary">pdxA</name>
    <name type="ordered locus">ECUMN_0054</name>
</gene>
<keyword id="KW-0170">Cobalt</keyword>
<keyword id="KW-0963">Cytoplasm</keyword>
<keyword id="KW-0460">Magnesium</keyword>
<keyword id="KW-0479">Metal-binding</keyword>
<keyword id="KW-0520">NAD</keyword>
<keyword id="KW-0521">NADP</keyword>
<keyword id="KW-0560">Oxidoreductase</keyword>
<keyword id="KW-0664">Pyridoxine biosynthesis</keyword>
<keyword id="KW-0862">Zinc</keyword>
<protein>
    <recommendedName>
        <fullName evidence="1">4-hydroxythreonine-4-phosphate dehydrogenase</fullName>
        <ecNumber evidence="1">1.1.1.262</ecNumber>
    </recommendedName>
    <alternativeName>
        <fullName evidence="1">4-(phosphohydroxy)-L-threonine dehydrogenase</fullName>
    </alternativeName>
</protein>
<feature type="chain" id="PRO_1000128245" description="4-hydroxythreonine-4-phosphate dehydrogenase">
    <location>
        <begin position="1"/>
        <end position="329"/>
    </location>
</feature>
<feature type="binding site" evidence="1">
    <location>
        <position position="136"/>
    </location>
    <ligand>
        <name>substrate</name>
    </ligand>
</feature>
<feature type="binding site" evidence="1">
    <location>
        <position position="137"/>
    </location>
    <ligand>
        <name>substrate</name>
    </ligand>
</feature>
<feature type="binding site" evidence="1">
    <location>
        <position position="166"/>
    </location>
    <ligand>
        <name>a divalent metal cation</name>
        <dbReference type="ChEBI" id="CHEBI:60240"/>
        <note>ligand shared between dimeric partners</note>
    </ligand>
</feature>
<feature type="binding site" evidence="1">
    <location>
        <position position="211"/>
    </location>
    <ligand>
        <name>a divalent metal cation</name>
        <dbReference type="ChEBI" id="CHEBI:60240"/>
        <note>ligand shared between dimeric partners</note>
    </ligand>
</feature>
<feature type="binding site" evidence="1">
    <location>
        <position position="266"/>
    </location>
    <ligand>
        <name>a divalent metal cation</name>
        <dbReference type="ChEBI" id="CHEBI:60240"/>
        <note>ligand shared between dimeric partners</note>
    </ligand>
</feature>
<feature type="binding site" evidence="1">
    <location>
        <position position="274"/>
    </location>
    <ligand>
        <name>substrate</name>
    </ligand>
</feature>
<feature type="binding site" evidence="1">
    <location>
        <position position="283"/>
    </location>
    <ligand>
        <name>substrate</name>
    </ligand>
</feature>
<feature type="binding site" evidence="1">
    <location>
        <position position="292"/>
    </location>
    <ligand>
        <name>substrate</name>
    </ligand>
</feature>
<organism>
    <name type="scientific">Escherichia coli O17:K52:H18 (strain UMN026 / ExPEC)</name>
    <dbReference type="NCBI Taxonomy" id="585056"/>
    <lineage>
        <taxon>Bacteria</taxon>
        <taxon>Pseudomonadati</taxon>
        <taxon>Pseudomonadota</taxon>
        <taxon>Gammaproteobacteria</taxon>
        <taxon>Enterobacterales</taxon>
        <taxon>Enterobacteriaceae</taxon>
        <taxon>Escherichia</taxon>
    </lineage>
</organism>
<accession>B7N7S7</accession>
<reference key="1">
    <citation type="journal article" date="2009" name="PLoS Genet.">
        <title>Organised genome dynamics in the Escherichia coli species results in highly diverse adaptive paths.</title>
        <authorList>
            <person name="Touchon M."/>
            <person name="Hoede C."/>
            <person name="Tenaillon O."/>
            <person name="Barbe V."/>
            <person name="Baeriswyl S."/>
            <person name="Bidet P."/>
            <person name="Bingen E."/>
            <person name="Bonacorsi S."/>
            <person name="Bouchier C."/>
            <person name="Bouvet O."/>
            <person name="Calteau A."/>
            <person name="Chiapello H."/>
            <person name="Clermont O."/>
            <person name="Cruveiller S."/>
            <person name="Danchin A."/>
            <person name="Diard M."/>
            <person name="Dossat C."/>
            <person name="Karoui M.E."/>
            <person name="Frapy E."/>
            <person name="Garry L."/>
            <person name="Ghigo J.M."/>
            <person name="Gilles A.M."/>
            <person name="Johnson J."/>
            <person name="Le Bouguenec C."/>
            <person name="Lescat M."/>
            <person name="Mangenot S."/>
            <person name="Martinez-Jehanne V."/>
            <person name="Matic I."/>
            <person name="Nassif X."/>
            <person name="Oztas S."/>
            <person name="Petit M.A."/>
            <person name="Pichon C."/>
            <person name="Rouy Z."/>
            <person name="Ruf C.S."/>
            <person name="Schneider D."/>
            <person name="Tourret J."/>
            <person name="Vacherie B."/>
            <person name="Vallenet D."/>
            <person name="Medigue C."/>
            <person name="Rocha E.P.C."/>
            <person name="Denamur E."/>
        </authorList>
    </citation>
    <scope>NUCLEOTIDE SEQUENCE [LARGE SCALE GENOMIC DNA]</scope>
    <source>
        <strain>UMN026 / ExPEC</strain>
    </source>
</reference>
<name>PDXA_ECOLU</name>